<feature type="chain" id="PRO_0000272220" description="Putative F-box protein PP2-B12">
    <location>
        <begin position="1"/>
        <end position="251"/>
    </location>
</feature>
<feature type="domain" description="F-box" evidence="1">
    <location>
        <begin position="1"/>
        <end position="46"/>
    </location>
</feature>
<name>P2B12_ARATH</name>
<proteinExistence type="predicted"/>
<sequence length="251" mass="29182">MNFLDLPEECIATMISFTSPFDACRISAVSKLLRSAADSNTTWERFLPSDYRMYIDNSLSRFSNKQLFLRFCESPLLIEDGRTSFWMEKRSGKKCWMLSARKLDIVWVDSPEFWIWVSIPDSRFEEVAGLLMVCWFEIRGKISTSLLSKATNYSAYLVFKEQEMGSFGFESLPLEVSFRSTRTEVYNNRRVFLKSGTQESREDGWLEIELGEYYVGFDDEEIEMSVLETREGGWKGGIIVQGIEIRPKELL</sequence>
<evidence type="ECO:0000255" key="1">
    <source>
        <dbReference type="PROSITE-ProRule" id="PRU00080"/>
    </source>
</evidence>
<keyword id="KW-1185">Reference proteome</keyword>
<dbReference type="EMBL" id="AB010068">
    <property type="protein sequence ID" value="BAB11208.1"/>
    <property type="molecule type" value="Genomic_DNA"/>
</dbReference>
<dbReference type="EMBL" id="CP002688">
    <property type="status" value="NOT_ANNOTATED_CDS"/>
    <property type="molecule type" value="Genomic_DNA"/>
</dbReference>
<dbReference type="SMR" id="Q9FLU7"/>
<dbReference type="PaxDb" id="3702-AT5G24560.1"/>
<dbReference type="Araport" id="AT5G24560"/>
<dbReference type="TAIR" id="AT5G24560">
    <property type="gene designation" value="PP2-B12"/>
</dbReference>
<dbReference type="eggNOG" id="ENOG502QRA4">
    <property type="taxonomic scope" value="Eukaryota"/>
</dbReference>
<dbReference type="HOGENOM" id="CLU_050973_0_0_1"/>
<dbReference type="InParanoid" id="Q9FLU7"/>
<dbReference type="PhylomeDB" id="Q9FLU7"/>
<dbReference type="PRO" id="PR:Q9FLU7"/>
<dbReference type="Proteomes" id="UP000006548">
    <property type="component" value="Chromosome 5"/>
</dbReference>
<dbReference type="ExpressionAtlas" id="Q9FLU7">
    <property type="expression patterns" value="baseline"/>
</dbReference>
<dbReference type="GO" id="GO:0030246">
    <property type="term" value="F:carbohydrate binding"/>
    <property type="evidence" value="ECO:0000250"/>
    <property type="project" value="TAIR"/>
</dbReference>
<dbReference type="CDD" id="cd22162">
    <property type="entry name" value="F-box_AtSKIP3-like"/>
    <property type="match status" value="1"/>
</dbReference>
<dbReference type="Gene3D" id="1.20.1280.50">
    <property type="match status" value="1"/>
</dbReference>
<dbReference type="InterPro" id="IPR036047">
    <property type="entry name" value="F-box-like_dom_sf"/>
</dbReference>
<dbReference type="InterPro" id="IPR001810">
    <property type="entry name" value="F-box_dom"/>
</dbReference>
<dbReference type="InterPro" id="IPR025886">
    <property type="entry name" value="PP2-like"/>
</dbReference>
<dbReference type="PANTHER" id="PTHR32278">
    <property type="entry name" value="F-BOX DOMAIN-CONTAINING PROTEIN"/>
    <property type="match status" value="1"/>
</dbReference>
<dbReference type="PANTHER" id="PTHR32278:SF111">
    <property type="entry name" value="F-BOX PROTEIN PP2-B12-RELATED"/>
    <property type="match status" value="1"/>
</dbReference>
<dbReference type="Pfam" id="PF00646">
    <property type="entry name" value="F-box"/>
    <property type="match status" value="1"/>
</dbReference>
<dbReference type="Pfam" id="PF14299">
    <property type="entry name" value="PP2"/>
    <property type="match status" value="1"/>
</dbReference>
<dbReference type="SMART" id="SM00256">
    <property type="entry name" value="FBOX"/>
    <property type="match status" value="1"/>
</dbReference>
<dbReference type="SUPFAM" id="SSF81383">
    <property type="entry name" value="F-box domain"/>
    <property type="match status" value="1"/>
</dbReference>
<dbReference type="PROSITE" id="PS50181">
    <property type="entry name" value="FBOX"/>
    <property type="match status" value="1"/>
</dbReference>
<organism>
    <name type="scientific">Arabidopsis thaliana</name>
    <name type="common">Mouse-ear cress</name>
    <dbReference type="NCBI Taxonomy" id="3702"/>
    <lineage>
        <taxon>Eukaryota</taxon>
        <taxon>Viridiplantae</taxon>
        <taxon>Streptophyta</taxon>
        <taxon>Embryophyta</taxon>
        <taxon>Tracheophyta</taxon>
        <taxon>Spermatophyta</taxon>
        <taxon>Magnoliopsida</taxon>
        <taxon>eudicotyledons</taxon>
        <taxon>Gunneridae</taxon>
        <taxon>Pentapetalae</taxon>
        <taxon>rosids</taxon>
        <taxon>malvids</taxon>
        <taxon>Brassicales</taxon>
        <taxon>Brassicaceae</taxon>
        <taxon>Camelineae</taxon>
        <taxon>Arabidopsis</taxon>
    </lineage>
</organism>
<protein>
    <recommendedName>
        <fullName>Putative F-box protein PP2-B12</fullName>
    </recommendedName>
    <alternativeName>
        <fullName>Protein PHLOEM PROTEIN 2-LIKE B12</fullName>
        <shortName>AtPP2-B12</shortName>
    </alternativeName>
</protein>
<reference key="1">
    <citation type="journal article" date="1998" name="DNA Res.">
        <title>Structural analysis of Arabidopsis thaliana chromosome 5. IV. Sequence features of the regions of 1,456,315 bp covered by nineteen physically assigned P1 and TAC clones.</title>
        <authorList>
            <person name="Sato S."/>
            <person name="Kaneko T."/>
            <person name="Kotani H."/>
            <person name="Nakamura Y."/>
            <person name="Asamizu E."/>
            <person name="Miyajima N."/>
            <person name="Tabata S."/>
        </authorList>
    </citation>
    <scope>NUCLEOTIDE SEQUENCE [LARGE SCALE GENOMIC DNA]</scope>
    <source>
        <strain>cv. Columbia</strain>
    </source>
</reference>
<reference key="2">
    <citation type="journal article" date="2017" name="Plant J.">
        <title>Araport11: a complete reannotation of the Arabidopsis thaliana reference genome.</title>
        <authorList>
            <person name="Cheng C.Y."/>
            <person name="Krishnakumar V."/>
            <person name="Chan A.P."/>
            <person name="Thibaud-Nissen F."/>
            <person name="Schobel S."/>
            <person name="Town C.D."/>
        </authorList>
    </citation>
    <scope>GENOME REANNOTATION</scope>
    <source>
        <strain>cv. Columbia</strain>
    </source>
</reference>
<reference key="3">
    <citation type="journal article" date="2003" name="Plant Physiol.">
        <title>Diversity of the superfamily of phloem lectins (phloem protein 2) in angiosperms.</title>
        <authorList>
            <person name="Dinant S."/>
            <person name="Clark A.M."/>
            <person name="Zhu Y."/>
            <person name="Vilaine F."/>
            <person name="Palauqui J.-C."/>
            <person name="Kusiak C."/>
            <person name="Thompson G.A."/>
        </authorList>
    </citation>
    <scope>GENE FAMILY</scope>
    <scope>NOMENCLATURE</scope>
</reference>
<accession>Q9FLU7</accession>
<gene>
    <name type="primary">PP2B12</name>
    <name type="ordered locus">At5g24560</name>
    <name type="ORF">K18P6.9</name>
</gene>